<feature type="chain" id="PRO_0000233979" description="NADH dehydrogenase [ubiquinone] 1 alpha subcomplex subunit 13">
    <location>
        <begin position="1"/>
        <end position="163"/>
    </location>
</feature>
<feature type="transmembrane region" description="Helical" evidence="2">
    <location>
        <begin position="48"/>
        <end position="70"/>
    </location>
</feature>
<protein>
    <recommendedName>
        <fullName>NADH dehydrogenase [ubiquinone] 1 alpha subcomplex subunit 13</fullName>
    </recommendedName>
    <alternativeName>
        <fullName>Complex I-B16.6</fullName>
        <shortName>CI-B16.6</shortName>
    </alternativeName>
    <alternativeName>
        <fullName>NADH-ubiquinone oxidoreductase B16.6 subunit</fullName>
    </alternativeName>
</protein>
<accession>Q4R6H1</accession>
<proteinExistence type="evidence at transcript level"/>
<reference key="1">
    <citation type="submission" date="2005-06" db="EMBL/GenBank/DDBJ databases">
        <title>DNA sequences of macaque genes expressed in brain or testis and its evolutionary implications.</title>
        <authorList>
            <consortium name="International consortium for macaque cDNA sequencing and analysis"/>
        </authorList>
    </citation>
    <scope>NUCLEOTIDE SEQUENCE [LARGE SCALE MRNA]</scope>
    <source>
        <tissue>Testis</tissue>
    </source>
</reference>
<comment type="function">
    <text evidence="1">Accessory subunit of the mitochondrial membrane respiratory chain NADH dehydrogenase (Complex I), that is believed not to be involved in catalysis. Complex I functions in the transfer of electrons from NADH to the respiratory chain. The immediate electron acceptor for the enzyme is believed to be ubiquinone. Involved in the interferon/all-trans-retinoic acid (IFN/RA) induced cell death. This apoptotic activity is inhibited by interaction with viral IRF1. Prevents the transactivation of STAT3 target genes. May play a role in CARD15-mediated innate mucosal responses and serve to regulate intestinal epithelial cell responses to microbes.</text>
</comment>
<comment type="subunit">
    <text evidence="1">Complex I is composed of 45 different subunits. Interacts with CARD15, but not with CARD4. Interacts with STAT3, but not with STAT1, STAT2 and STAT5A. Interacts with OLFM4.</text>
</comment>
<comment type="subcellular location">
    <subcellularLocation>
        <location evidence="1">Mitochondrion inner membrane</location>
        <topology evidence="2">Single-pass membrane protein</topology>
        <orientation evidence="1">Matrix side</orientation>
    </subcellularLocation>
    <subcellularLocation>
        <location evidence="1">Nucleus</location>
    </subcellularLocation>
    <text evidence="1">Localizes mainly in the mitochondrion. May be translocated into the nucleus upon IFN/RA treatment.</text>
</comment>
<comment type="similarity">
    <text evidence="3">Belongs to the complex I NDUFA13 subunit family.</text>
</comment>
<evidence type="ECO:0000250" key="1">
    <source>
        <dbReference type="UniProtKB" id="Q9P0J0"/>
    </source>
</evidence>
<evidence type="ECO:0000255" key="2"/>
<evidence type="ECO:0000305" key="3"/>
<gene>
    <name type="primary">NDUFA13</name>
    <name type="ORF">QtsA-18051</name>
</gene>
<keyword id="KW-0249">Electron transport</keyword>
<keyword id="KW-0472">Membrane</keyword>
<keyword id="KW-0496">Mitochondrion</keyword>
<keyword id="KW-0999">Mitochondrion inner membrane</keyword>
<keyword id="KW-0539">Nucleus</keyword>
<keyword id="KW-1185">Reference proteome</keyword>
<keyword id="KW-0679">Respiratory chain</keyword>
<keyword id="KW-0812">Transmembrane</keyword>
<keyword id="KW-1133">Transmembrane helix</keyword>
<keyword id="KW-0813">Transport</keyword>
<sequence length="163" mass="19018">MAVAVCHFRLGPEVWNTASMEMPKVKQDMPPPGGYGPIDYKRNLPRRGLSGYSMLAIGIGTLVYGHWSIMKWNRERRRLQIEDFEARIALMPLFQAETDRRTLQMLRENLEEEAIIMKDVPDWKVGESVFHTTRWVPPLIGELYGLRTTEETIHANYGFMWYT</sequence>
<dbReference type="EMBL" id="AB169212">
    <property type="protein sequence ID" value="BAE01304.1"/>
    <property type="molecule type" value="mRNA"/>
</dbReference>
<dbReference type="RefSeq" id="NP_001270819.1">
    <property type="nucleotide sequence ID" value="NM_001283890.1"/>
</dbReference>
<dbReference type="SMR" id="Q4R6H1"/>
<dbReference type="STRING" id="9541.ENSMFAP00000027755"/>
<dbReference type="Ensembl" id="ENSMFAT00000083684.1">
    <property type="protein sequence ID" value="ENSMFAP00000047071.1"/>
    <property type="gene ID" value="ENSMFAG00000011503.2"/>
</dbReference>
<dbReference type="VEuPathDB" id="HostDB:ENSMFAG00000045268"/>
<dbReference type="eggNOG" id="KOG3300">
    <property type="taxonomic scope" value="Eukaryota"/>
</dbReference>
<dbReference type="GeneTree" id="ENSGT00390000007227"/>
<dbReference type="Proteomes" id="UP000233100">
    <property type="component" value="Chromosome 19"/>
</dbReference>
<dbReference type="Bgee" id="ENSMFAG00000011503">
    <property type="expression patterns" value="Expressed in temporal lobe and 2 other cell types or tissues"/>
</dbReference>
<dbReference type="GO" id="GO:0005737">
    <property type="term" value="C:cytoplasm"/>
    <property type="evidence" value="ECO:0000250"/>
    <property type="project" value="UniProtKB"/>
</dbReference>
<dbReference type="GO" id="GO:0005743">
    <property type="term" value="C:mitochondrial inner membrane"/>
    <property type="evidence" value="ECO:0007669"/>
    <property type="project" value="UniProtKB-SubCell"/>
</dbReference>
<dbReference type="GO" id="GO:0031966">
    <property type="term" value="C:mitochondrial membrane"/>
    <property type="evidence" value="ECO:0000250"/>
    <property type="project" value="UniProtKB"/>
</dbReference>
<dbReference type="GO" id="GO:0005739">
    <property type="term" value="C:mitochondrion"/>
    <property type="evidence" value="ECO:0000250"/>
    <property type="project" value="UniProtKB"/>
</dbReference>
<dbReference type="GO" id="GO:0005654">
    <property type="term" value="C:nucleoplasm"/>
    <property type="evidence" value="ECO:0000250"/>
    <property type="project" value="UniProtKB"/>
</dbReference>
<dbReference type="GO" id="GO:0098803">
    <property type="term" value="C:respiratory chain complex"/>
    <property type="evidence" value="ECO:0000250"/>
    <property type="project" value="UniProtKB"/>
</dbReference>
<dbReference type="GO" id="GO:0045271">
    <property type="term" value="C:respiratory chain complex I"/>
    <property type="evidence" value="ECO:0000250"/>
    <property type="project" value="UniProtKB"/>
</dbReference>
<dbReference type="GO" id="GO:0045892">
    <property type="term" value="P:negative regulation of DNA-templated transcription"/>
    <property type="evidence" value="ECO:0000250"/>
    <property type="project" value="UniProtKB"/>
</dbReference>
<dbReference type="InterPro" id="IPR009346">
    <property type="entry name" value="GRIM-19"/>
</dbReference>
<dbReference type="PANTHER" id="PTHR12966:SF0">
    <property type="entry name" value="NADH DEHYDROGENASE [UBIQUINONE] 1 ALPHA SUBCOMPLEX SUBUNIT 13"/>
    <property type="match status" value="1"/>
</dbReference>
<dbReference type="PANTHER" id="PTHR12966">
    <property type="entry name" value="NADH DEHYDROGENASE UBIQUINONE 1 ALPHA SUBCOMPLEX SUBUNIT 13"/>
    <property type="match status" value="1"/>
</dbReference>
<dbReference type="Pfam" id="PF06212">
    <property type="entry name" value="GRIM-19"/>
    <property type="match status" value="1"/>
</dbReference>
<name>NDUAD_MACFA</name>
<organism>
    <name type="scientific">Macaca fascicularis</name>
    <name type="common">Crab-eating macaque</name>
    <name type="synonym">Cynomolgus monkey</name>
    <dbReference type="NCBI Taxonomy" id="9541"/>
    <lineage>
        <taxon>Eukaryota</taxon>
        <taxon>Metazoa</taxon>
        <taxon>Chordata</taxon>
        <taxon>Craniata</taxon>
        <taxon>Vertebrata</taxon>
        <taxon>Euteleostomi</taxon>
        <taxon>Mammalia</taxon>
        <taxon>Eutheria</taxon>
        <taxon>Euarchontoglires</taxon>
        <taxon>Primates</taxon>
        <taxon>Haplorrhini</taxon>
        <taxon>Catarrhini</taxon>
        <taxon>Cercopithecidae</taxon>
        <taxon>Cercopithecinae</taxon>
        <taxon>Macaca</taxon>
    </lineage>
</organism>